<protein>
    <recommendedName>
        <fullName evidence="1">Large ribosomal subunit protein uL14m</fullName>
    </recommendedName>
    <alternativeName>
        <fullName>60S ribosomal protein L14, hydrogenosomal</fullName>
    </alternativeName>
</protein>
<keyword id="KW-0377">Hydrogenosome</keyword>
<keyword id="KW-0687">Ribonucleoprotein</keyword>
<keyword id="KW-0689">Ribosomal protein</keyword>
<accession>Q5DUY3</accession>
<feature type="chain" id="PRO_0000128610" description="Large ribosomal subunit protein uL14m">
    <location>
        <begin position="1"/>
        <end position="133"/>
    </location>
</feature>
<sequence length="133" mass="15615">MIQKFTNLYVTDNSGAIAVRVFQTYPGNRKIVPVGSIVRHSVKKIHRILPWGKQLRGRRKRIICRSQCGRSWIVQTSYQIPYIDGATLRFSKNRVLLVKRKRGIRIYRGRRIYGLTTRAVNNERTINLFRICI</sequence>
<comment type="subunit">
    <text evidence="1">Probably part of the large ribosomal subunit.</text>
</comment>
<comment type="subcellular location">
    <subcellularLocation>
        <location evidence="2">Hydrogenosome</location>
    </subcellularLocation>
</comment>
<comment type="similarity">
    <text evidence="1">Belongs to the universal ribosomal protein uL14 family.</text>
</comment>
<geneLocation type="hydrogenosome"/>
<reference key="1">
    <citation type="journal article" date="2005" name="Nature">
        <title>An anaerobic mitochondrion that produces hydrogen.</title>
        <authorList>
            <person name="Boxma B."/>
            <person name="de Graaf R.M."/>
            <person name="van der Staay G.W.M."/>
            <person name="van Alen T.A."/>
            <person name="Ricard G."/>
            <person name="Gabaldon T."/>
            <person name="van Hoek A.H.A.M."/>
            <person name="Moon-van der Staay S.Y."/>
            <person name="Koopman W.J.H."/>
            <person name="van Hellemond J.J."/>
            <person name="Tielens A.G.M."/>
            <person name="Friedrich T."/>
            <person name="Veenhuis M."/>
            <person name="Huynen M.A."/>
            <person name="Hackstein J.H.P."/>
        </authorList>
    </citation>
    <scope>NUCLEOTIDE SEQUENCE [LARGE SCALE GENOMIC DNA]</scope>
</reference>
<proteinExistence type="inferred from homology"/>
<name>RL14H_NYCOV</name>
<gene>
    <name type="primary">rpl14</name>
</gene>
<evidence type="ECO:0000305" key="1"/>
<evidence type="ECO:0000305" key="2">
    <source>
    </source>
</evidence>
<organism>
    <name type="scientific">Nyctotherus ovalis</name>
    <dbReference type="NCBI Taxonomy" id="70075"/>
    <lineage>
        <taxon>Eukaryota</taxon>
        <taxon>Sar</taxon>
        <taxon>Alveolata</taxon>
        <taxon>Ciliophora</taxon>
        <taxon>Intramacronucleata</taxon>
        <taxon>Armophorea</taxon>
        <taxon>Clevelandellida</taxon>
        <taxon>Nyctotheridae</taxon>
        <taxon>Nyctotherus</taxon>
    </lineage>
</organism>
<dbReference type="EMBL" id="AJ871267">
    <property type="protein sequence ID" value="CAI38855.1"/>
    <property type="molecule type" value="Genomic_DNA"/>
</dbReference>
<dbReference type="SMR" id="Q5DUY3"/>
<dbReference type="GO" id="GO:0042566">
    <property type="term" value="C:hydrogenosome"/>
    <property type="evidence" value="ECO:0007669"/>
    <property type="project" value="UniProtKB-SubCell"/>
</dbReference>
<dbReference type="GO" id="GO:1990904">
    <property type="term" value="C:ribonucleoprotein complex"/>
    <property type="evidence" value="ECO:0007669"/>
    <property type="project" value="UniProtKB-KW"/>
</dbReference>
<dbReference type="GO" id="GO:0005840">
    <property type="term" value="C:ribosome"/>
    <property type="evidence" value="ECO:0007669"/>
    <property type="project" value="UniProtKB-KW"/>
</dbReference>
<dbReference type="GO" id="GO:0003735">
    <property type="term" value="F:structural constituent of ribosome"/>
    <property type="evidence" value="ECO:0007669"/>
    <property type="project" value="InterPro"/>
</dbReference>
<dbReference type="GO" id="GO:0006412">
    <property type="term" value="P:translation"/>
    <property type="evidence" value="ECO:0007669"/>
    <property type="project" value="InterPro"/>
</dbReference>
<dbReference type="Gene3D" id="2.40.150.20">
    <property type="entry name" value="Ribosomal protein L14"/>
    <property type="match status" value="1"/>
</dbReference>
<dbReference type="HAMAP" id="MF_01367">
    <property type="entry name" value="Ribosomal_uL14"/>
    <property type="match status" value="1"/>
</dbReference>
<dbReference type="InterPro" id="IPR000218">
    <property type="entry name" value="Ribosomal_uL14"/>
</dbReference>
<dbReference type="InterPro" id="IPR036853">
    <property type="entry name" value="Ribosomal_uL14_sf"/>
</dbReference>
<dbReference type="Pfam" id="PF00238">
    <property type="entry name" value="Ribosomal_L14"/>
    <property type="match status" value="1"/>
</dbReference>
<dbReference type="SMART" id="SM01374">
    <property type="entry name" value="Ribosomal_L14"/>
    <property type="match status" value="1"/>
</dbReference>
<dbReference type="SUPFAM" id="SSF50193">
    <property type="entry name" value="Ribosomal protein L14"/>
    <property type="match status" value="1"/>
</dbReference>